<organism>
    <name type="scientific">Bos taurus</name>
    <name type="common">Bovine</name>
    <dbReference type="NCBI Taxonomy" id="9913"/>
    <lineage>
        <taxon>Eukaryota</taxon>
        <taxon>Metazoa</taxon>
        <taxon>Chordata</taxon>
        <taxon>Craniata</taxon>
        <taxon>Vertebrata</taxon>
        <taxon>Euteleostomi</taxon>
        <taxon>Mammalia</taxon>
        <taxon>Eutheria</taxon>
        <taxon>Laurasiatheria</taxon>
        <taxon>Artiodactyla</taxon>
        <taxon>Ruminantia</taxon>
        <taxon>Pecora</taxon>
        <taxon>Bovidae</taxon>
        <taxon>Bovinae</taxon>
        <taxon>Bos</taxon>
    </lineage>
</organism>
<evidence type="ECO:0000250" key="1">
    <source>
        <dbReference type="UniProtKB" id="P60410"/>
    </source>
</evidence>
<evidence type="ECO:0000255" key="2"/>
<evidence type="ECO:0000312" key="3">
    <source>
        <dbReference type="EMBL" id="AAI49134.1"/>
    </source>
</evidence>
<gene>
    <name evidence="3" type="primary">KRTAP10-8</name>
</gene>
<sequence>MADTCCSRTCVVAASTLSVCSSDLSCGNQVSSPSACIGSSWQVDDCQETCCEPTCCAPSCCAPAPRLTLICAPVNCESSPCCQPACSSSSPCQQACCVPVCCRPVCCTPVCCRPVCCRPVCCTPVCCRPVCCRPVCCRPVCCRPVCCTPVCCRPMCCEASPCSAPSSCCRPSSSVSLLCRPVCRPTCCVPTFFCQPSCCHPASSVSLLCQPSCSSSAC</sequence>
<proteinExistence type="evidence at transcript level"/>
<reference evidence="3" key="1">
    <citation type="submission" date="2007-07" db="EMBL/GenBank/DDBJ databases">
        <authorList>
            <consortium name="NIH - Mammalian Gene Collection (MGC) project"/>
        </authorList>
    </citation>
    <scope>NUCLEOTIDE SEQUENCE [LARGE SCALE MRNA]</scope>
    <source>
        <strain evidence="3">Hereford</strain>
        <tissue evidence="3">Fetal skin</tissue>
    </source>
</reference>
<comment type="function">
    <text evidence="1">In the hair cortex, hair keratin intermediate filaments are embedded in an interfilamentous matrix, consisting of hair keratin-associated proteins (KRTAP), which are essential for the formation of a rigid and resistant hair shaft through their extensive disulfide bond cross-linking with abundant cysteine residues of hair keratins. The matrix proteins include the high-sulfur and high-glycine-tyrosine keratins (By similarity).</text>
</comment>
<comment type="subunit">
    <text evidence="1">Interacts with hair keratins.</text>
</comment>
<comment type="similarity">
    <text evidence="2">Belongs to the KRTAP type 10 family.</text>
</comment>
<name>KR108_BOVIN</name>
<keyword id="KW-0416">Keratin</keyword>
<keyword id="KW-1185">Reference proteome</keyword>
<keyword id="KW-0677">Repeat</keyword>
<dbReference type="EMBL" id="BC149133">
    <property type="protein sequence ID" value="AAI49134.1"/>
    <property type="molecule type" value="mRNA"/>
</dbReference>
<dbReference type="RefSeq" id="NP_001094760.1">
    <property type="nucleotide sequence ID" value="NM_001101290.1"/>
</dbReference>
<dbReference type="STRING" id="9913.ENSBTAP00000041209"/>
<dbReference type="PaxDb" id="9913-ENSBTAP00000041209"/>
<dbReference type="Ensembl" id="ENSBTAT00000043652.5">
    <property type="protein sequence ID" value="ENSBTAP00000041209.3"/>
    <property type="gene ID" value="ENSBTAG00000040291.4"/>
</dbReference>
<dbReference type="GeneID" id="783679"/>
<dbReference type="KEGG" id="bta:783679"/>
<dbReference type="CTD" id="386681"/>
<dbReference type="VEuPathDB" id="HostDB:ENSBTAG00000040291"/>
<dbReference type="eggNOG" id="KOG4726">
    <property type="taxonomic scope" value="Eukaryota"/>
</dbReference>
<dbReference type="GeneTree" id="ENSGT00940000163441"/>
<dbReference type="HOGENOM" id="CLU_062832_0_0_1"/>
<dbReference type="InParanoid" id="A6QP35"/>
<dbReference type="OMA" id="RCDPPCR"/>
<dbReference type="OrthoDB" id="9838469at2759"/>
<dbReference type="TreeFam" id="TF351356"/>
<dbReference type="Reactome" id="R-BTA-6805567">
    <property type="pathway name" value="Keratinization"/>
</dbReference>
<dbReference type="Proteomes" id="UP000009136">
    <property type="component" value="Chromosome 1"/>
</dbReference>
<dbReference type="Bgee" id="ENSBTAG00000040291">
    <property type="expression patterns" value="Expressed in zone of skin and 3 other cell types or tissues"/>
</dbReference>
<dbReference type="GO" id="GO:0005829">
    <property type="term" value="C:cytosol"/>
    <property type="evidence" value="ECO:0007669"/>
    <property type="project" value="UniProtKB-ARBA"/>
</dbReference>
<dbReference type="GO" id="GO:0045095">
    <property type="term" value="C:keratin filament"/>
    <property type="evidence" value="ECO:0007669"/>
    <property type="project" value="InterPro"/>
</dbReference>
<dbReference type="InterPro" id="IPR002494">
    <property type="entry name" value="KAP"/>
</dbReference>
<dbReference type="PANTHER" id="PTHR23262">
    <property type="entry name" value="KERATIN ASSOCIATED PROTEIN"/>
    <property type="match status" value="1"/>
</dbReference>
<dbReference type="PANTHER" id="PTHR23262:SF50">
    <property type="entry name" value="KERATIN-ASSOCIATED PROTEIN 10-1"/>
    <property type="match status" value="1"/>
</dbReference>
<dbReference type="Pfam" id="PF13885">
    <property type="entry name" value="Keratin_B2_2"/>
    <property type="match status" value="3"/>
</dbReference>
<feature type="chain" id="PRO_0000355590" description="Keratin-associated protein 10-8">
    <location>
        <begin position="1"/>
        <end position="218"/>
    </location>
</feature>
<feature type="repeat" description="1" evidence="2">
    <location>
        <begin position="50"/>
        <end position="54"/>
    </location>
</feature>
<feature type="repeat" description="2" evidence="2">
    <location>
        <begin position="55"/>
        <end position="59"/>
    </location>
</feature>
<feature type="repeat" description="3" evidence="2">
    <location>
        <begin position="60"/>
        <end position="64"/>
    </location>
</feature>
<feature type="repeat" description="4" evidence="2">
    <location>
        <begin position="86"/>
        <end position="90"/>
    </location>
</feature>
<feature type="repeat" description="5" evidence="2">
    <location>
        <begin position="96"/>
        <end position="100"/>
    </location>
</feature>
<feature type="repeat" description="6" evidence="2">
    <location>
        <begin position="101"/>
        <end position="105"/>
    </location>
</feature>
<feature type="repeat" description="7" evidence="2">
    <location>
        <begin position="111"/>
        <end position="115"/>
    </location>
</feature>
<feature type="repeat" description="8" evidence="2">
    <location>
        <begin position="121"/>
        <end position="125"/>
    </location>
</feature>
<feature type="repeat" description="9" evidence="2">
    <location>
        <begin position="131"/>
        <end position="135"/>
    </location>
</feature>
<feature type="repeat" description="10" evidence="2">
    <location>
        <begin position="136"/>
        <end position="140"/>
    </location>
</feature>
<feature type="repeat" description="11" evidence="2">
    <location>
        <begin position="141"/>
        <end position="145"/>
    </location>
</feature>
<feature type="repeat" description="12" evidence="2">
    <location>
        <begin position="151"/>
        <end position="155"/>
    </location>
</feature>
<feature type="repeat" description="13" evidence="2">
    <location>
        <begin position="161"/>
        <end position="167"/>
    </location>
</feature>
<feature type="repeat" description="14" evidence="2">
    <location>
        <begin position="168"/>
        <end position="172"/>
    </location>
</feature>
<feature type="repeat" description="15" evidence="2">
    <location>
        <begin position="187"/>
        <end position="191"/>
    </location>
</feature>
<feature type="repeat" description="16" evidence="2">
    <location>
        <begin position="198"/>
        <end position="202"/>
    </location>
</feature>
<feature type="region of interest" description="16 X 5 AA repeats of C-C-X(3)" evidence="2">
    <location>
        <begin position="26"/>
        <end position="202"/>
    </location>
</feature>
<protein>
    <recommendedName>
        <fullName evidence="1">Keratin-associated protein 10-8</fullName>
    </recommendedName>
</protein>
<accession>A6QP35</accession>